<reference key="1">
    <citation type="submission" date="2007-03" db="EMBL/GenBank/DDBJ databases">
        <title>Sequencing analysis of Capsella bursa-pastoris JO22 chloroplast DNA.</title>
        <authorList>
            <person name="Hosouchi T."/>
            <person name="Tsuruoka H."/>
            <person name="Kotani H."/>
        </authorList>
    </citation>
    <scope>NUCLEOTIDE SEQUENCE [LARGE SCALE GENOMIC DNA]</scope>
</reference>
<sequence>MKGHQFKSWIFELREIVREIKNSHYFLDSWTQFNSVGSFIHIFFHQERFRKLLDPRIFSILLLRNSQGSTSNRYFSIKGVVLFVVAALLYRINNRNMVESKNLYLKGLLPIPMNSIGPRNDTSEESFGSCNINRLVVSLLFLTKGKKISESCFRDPKESTWVLPITQKCIMPESNWSSRWWRNWIGKKRDFCCKISNETVAGIDISFKEKDIKYLEFLFVYYMDDPIRKGHDWELFDRLSPSKRRNIINLNSGQLFEILVKDWICYLMFAFREKIPIEVEGFFKQQGAGSTIQSNDIEHVSHLFSRNKWAISLQNCAQFHMWQFHQDLFVSWGKNPHESDFFRKISRENWIWLDNVWLVNKDRFFSKVRNVSSNIQYDSTRSSFVQVTDSSQLNGSSDQFIDPFDSISNEDSEYHTLINQREIQQLKERSILLDPSFIQTEGREIESDRFPKYLSDYSSMPRLFTEREKRMIIHSLPEESEEFLGNPTRAIRSFFSDRWSELHLGSNPTERSTRDQKLLKKEQDVSFVPSRRSENKEIVNIFKIITYLQNTVSIHPISSDLGCDMVPKDELDMDSSNKISFLNKNPFFDLFHLFHERKRGGYTLRHESEERFQEMADLFTLSITEPDLVYHKGFAFSIDSYGLDQRQFLKEVFNFRDESKKKSLLVLPPIFYEENESFYRRIRKNWVRISCGNYLEDPKRVVFASNNIVEAVNQYRLIRNMIQIQFQYSPYGYIRNVLNRFFLMKRPDRNFEYGIQRDLIGNDTLNHRTIMKDTINQHLSNLKKSQKKWFDPLIFLSQTERSINRDPNAYRYKWSNGSKNFQEHLEHFVSERKSRFQVVFDQLCINQYSIDWSEVIDKKDLSKSLRFFLSKLLRFFLSKLLLFLSKLLLFLSNSLPFFFVSFENIPIHRSEIHIYELKGPNDQLCNQLLESIGLQIVHLKKLKPFLLDDHNTSQKSKFLINGGTISPFLFNKIPKWMIDSFHTRKNRRKSFDNTDSYFSIVSHDQDNWLNPAKPFQRSSLISSFSKANRLRFLNNPHHFCFYCNKRFPFYVEKARLNNSDFTYGQFLTILFIHNKIFSSCGGKKKHAFLERDTISPSSIESQVSNIFISNDFPQSGDERYNLYKSFHFPIRSDPLVRRAIYSIADISGTPLIEGQRVNFERTYCQTLSDMNLSDSEEKSLHQYLNFNSNMGLIHTPCSEKYLQRKKRSLCLKKCVDKGQMDRPFQRDSAFSTLSKWNLFQTYMPWFFTSTGYKYLNLIFLDTFSDLLRILSSSQKFVSIFHDIMHGVDISWRILQKKLCLPQRNLISEISSKSLHNLLLSEEMIHRNNESSLISTHLRSPNVREVLYSILFLLLVAGYIVRTHLLFVSRAYSELQTEFEKIKSLMIPSYMIELRKLLDRYPTSELNSFWLKNLFLVALEQLGDCLEEIRGSGGNMLWGGDPAYGVKSIRSKKKDLKINFIDIIDLISIIPNPINRITFSRNTRHLSHTSKEIYSLIRKRKNVSGDWIDDKIESWVANSDSIDDKEREFLVQFSTLRAEKRIDQILLSLTHSDHLSKNDSGYQMIEQPGTIYLRYLVDIHKKYLMNYEFNTSCLAERRIFLAHYQTITYSQTSCGANSFHFPSHGKPFSLRLALSPSRSILVIGSIGTGRSYLVKYLATNSYVPFITVFLNKFLDNKPKGFFIDDIDIDDSDDIDASNDIDRELDTELELLTMMNALTMDMMSEIDRFYITLQFELAKAMSPCIIWIPNIHDLDVNESSYLALGLLVNSLSRDCERCSTRNILVIASTHIPQKVDPALIAPNKLNTCIKIRRLLIPQQRKHFFTLSYTRGFHLENKMFHTNGFESITMGSSARDLVALTNEALSISITQKKSIIDTNTIRSALHSQTWDLRSQVRSVQDHGILFYQIGRAVAQNVLISNCPIDPISIYMKKKSCNEGDSYLYKWYFELGTSMKKFTILLYLLSCSAGSVAQDLWSLPVPDEKNRITSYGFIENDSDLVHGLLEVQGALVGSSRTEKDCSQFDNDRVTLLFRSEPRDPLYMMQDGSCSIVDQRFLYEKYESEFEEGEGEGVLDPQQIEEDLFNHIVWAPRIWRPRGFLFDCIERPNELGFPYLAGSFRGKRIIYDEKYELQENDSEFLQSGTMQYQRRDRFSKEQGFFRISQFIWDPADPLFFLFKDQPFVSVFSHREFFADEEMSKGLLTSQTDPPTSIYKRWFIKNTQEKHFELLIQRQRWLRTNSSLSNGFFRSNTRSESYQYLSNLFLSNGTLLDRMTKTLLKKRWLFSDEMKIGFM</sequence>
<protein>
    <recommendedName>
        <fullName evidence="1">Protein Ycf2</fullName>
    </recommendedName>
</protein>
<geneLocation type="chloroplast"/>
<dbReference type="EMBL" id="AP009371">
    <property type="protein sequence ID" value="BAF50240.1"/>
    <property type="molecule type" value="Genomic_DNA"/>
</dbReference>
<dbReference type="EMBL" id="AP009371">
    <property type="protein sequence ID" value="BAF50263.1"/>
    <property type="molecule type" value="Genomic_DNA"/>
</dbReference>
<dbReference type="GO" id="GO:0009570">
    <property type="term" value="C:chloroplast stroma"/>
    <property type="evidence" value="ECO:0007669"/>
    <property type="project" value="UniProtKB-SubCell"/>
</dbReference>
<dbReference type="GO" id="GO:0005524">
    <property type="term" value="F:ATP binding"/>
    <property type="evidence" value="ECO:0007669"/>
    <property type="project" value="UniProtKB-KW"/>
</dbReference>
<dbReference type="GO" id="GO:0016887">
    <property type="term" value="F:ATP hydrolysis activity"/>
    <property type="evidence" value="ECO:0007669"/>
    <property type="project" value="InterPro"/>
</dbReference>
<dbReference type="CDD" id="cd19505">
    <property type="entry name" value="RecA-like_Ycf2"/>
    <property type="match status" value="1"/>
</dbReference>
<dbReference type="Gene3D" id="3.40.50.300">
    <property type="entry name" value="P-loop containing nucleotide triphosphate hydrolases"/>
    <property type="match status" value="1"/>
</dbReference>
<dbReference type="HAMAP" id="MF_01330">
    <property type="entry name" value="Ycf2"/>
    <property type="match status" value="1"/>
</dbReference>
<dbReference type="InterPro" id="IPR003593">
    <property type="entry name" value="AAA+_ATPase"/>
</dbReference>
<dbReference type="InterPro" id="IPR003959">
    <property type="entry name" value="ATPase_AAA_core"/>
</dbReference>
<dbReference type="InterPro" id="IPR027417">
    <property type="entry name" value="P-loop_NTPase"/>
</dbReference>
<dbReference type="InterPro" id="IPR008543">
    <property type="entry name" value="Uncharacterised_Ycf2"/>
</dbReference>
<dbReference type="InterPro" id="IPR056777">
    <property type="entry name" value="Ycf2_N"/>
</dbReference>
<dbReference type="PANTHER" id="PTHR33078:SF89">
    <property type="entry name" value="PROTEIN YCF2"/>
    <property type="match status" value="1"/>
</dbReference>
<dbReference type="PANTHER" id="PTHR33078">
    <property type="entry name" value="PROTEIN YCF2-RELATED"/>
    <property type="match status" value="1"/>
</dbReference>
<dbReference type="Pfam" id="PF00004">
    <property type="entry name" value="AAA"/>
    <property type="match status" value="1"/>
</dbReference>
<dbReference type="Pfam" id="PF05695">
    <property type="entry name" value="Ycf2"/>
    <property type="match status" value="1"/>
</dbReference>
<dbReference type="SMART" id="SM00382">
    <property type="entry name" value="AAA"/>
    <property type="match status" value="1"/>
</dbReference>
<dbReference type="SUPFAM" id="SSF52540">
    <property type="entry name" value="P-loop containing nucleoside triphosphate hydrolases"/>
    <property type="match status" value="1"/>
</dbReference>
<gene>
    <name evidence="1" type="primary">ycf2-A</name>
</gene>
<gene>
    <name evidence="1" type="primary">ycf2-B</name>
</gene>
<proteinExistence type="inferred from homology"/>
<evidence type="ECO:0000255" key="1">
    <source>
        <dbReference type="HAMAP-Rule" id="MF_01330"/>
    </source>
</evidence>
<organism>
    <name type="scientific">Capsella bursa-pastoris</name>
    <name type="common">Shepherd's purse</name>
    <name type="synonym">Thlaspi bursa-pastoris</name>
    <dbReference type="NCBI Taxonomy" id="3719"/>
    <lineage>
        <taxon>Eukaryota</taxon>
        <taxon>Viridiplantae</taxon>
        <taxon>Streptophyta</taxon>
        <taxon>Embryophyta</taxon>
        <taxon>Tracheophyta</taxon>
        <taxon>Spermatophyta</taxon>
        <taxon>Magnoliopsida</taxon>
        <taxon>eudicotyledons</taxon>
        <taxon>Gunneridae</taxon>
        <taxon>Pentapetalae</taxon>
        <taxon>rosids</taxon>
        <taxon>malvids</taxon>
        <taxon>Brassicales</taxon>
        <taxon>Brassicaceae</taxon>
        <taxon>Camelineae</taxon>
        <taxon>Capsella</taxon>
    </lineage>
</organism>
<comment type="function">
    <text evidence="1">Probable ATPase of unknown function. Its presence in a non-photosynthetic plant (Epifagus virginiana) and experiments in tobacco indicate that it has an essential function which is probably not related to photosynthesis.</text>
</comment>
<comment type="subcellular location">
    <subcellularLocation>
        <location evidence="1">Plastid</location>
        <location evidence="1">Chloroplast stroma</location>
    </subcellularLocation>
</comment>
<comment type="similarity">
    <text evidence="1">Belongs to the Ycf2 family.</text>
</comment>
<accession>A4QKN5</accession>
<feature type="chain" id="PRO_0000343761" description="Protein Ycf2">
    <location>
        <begin position="1"/>
        <end position="2289"/>
    </location>
</feature>
<feature type="binding site" evidence="1">
    <location>
        <begin position="1643"/>
        <end position="1650"/>
    </location>
    <ligand>
        <name>ATP</name>
        <dbReference type="ChEBI" id="CHEBI:30616"/>
    </ligand>
</feature>
<keyword id="KW-0067">ATP-binding</keyword>
<keyword id="KW-0150">Chloroplast</keyword>
<keyword id="KW-0547">Nucleotide-binding</keyword>
<keyword id="KW-0934">Plastid</keyword>
<name>YCF2_CAPBU</name>